<accession>Q9RN20</accession>
<dbReference type="EMBL" id="AF188935">
    <property type="protein sequence ID" value="AAF13617.1"/>
    <property type="molecule type" value="Genomic_DNA"/>
</dbReference>
<dbReference type="EMBL" id="AE011191">
    <property type="protein sequence ID" value="AAM26172.1"/>
    <property type="molecule type" value="Genomic_DNA"/>
</dbReference>
<dbReference type="EMBL" id="AE017335">
    <property type="protein sequence ID" value="AAT28941.2"/>
    <property type="molecule type" value="Genomic_DNA"/>
</dbReference>
<dbReference type="RefSeq" id="NP_053167.1">
    <property type="nucleotide sequence ID" value="NC_002146.1"/>
</dbReference>
<dbReference type="RefSeq" id="WP_001067155.1">
    <property type="nucleotide sequence ID" value="NZ_VTZL01000009.1"/>
</dbReference>
<dbReference type="SMR" id="Q9RN20"/>
<dbReference type="GeneID" id="45025326"/>
<dbReference type="KEGG" id="banh:HYU01_29055"/>
<dbReference type="KEGG" id="bar:GBAA_pXO2_0011"/>
<dbReference type="HOGENOM" id="CLU_205679_0_0_9"/>
<dbReference type="OMA" id="MIATFFK"/>
<dbReference type="Proteomes" id="UP000000594">
    <property type="component" value="Plasmid pXO2"/>
</dbReference>
<dbReference type="GO" id="GO:0016020">
    <property type="term" value="C:membrane"/>
    <property type="evidence" value="ECO:0007669"/>
    <property type="project" value="UniProtKB-SubCell"/>
</dbReference>
<feature type="chain" id="PRO_0000216833" description="Uncharacterized protein pXO2-12/BXB0011/GBAA_pXO2_0011">
    <location>
        <begin position="1"/>
        <end position="67"/>
    </location>
</feature>
<feature type="transmembrane region" description="Helical" evidence="1">
    <location>
        <begin position="4"/>
        <end position="24"/>
    </location>
</feature>
<geneLocation type="plasmid">
    <name>pXO2</name>
</geneLocation>
<proteinExistence type="predicted"/>
<protein>
    <recommendedName>
        <fullName>Uncharacterized protein pXO2-12/BXB0011/GBAA_pXO2_0011</fullName>
    </recommendedName>
</protein>
<reference key="1">
    <citation type="journal article" date="1999" name="J. Appl. Microbiol.">
        <title>Sequence, assembly and analysis of pXO1 and pXO2.</title>
        <authorList>
            <person name="Okinaka R.T."/>
            <person name="Cloud K."/>
            <person name="Hampton O."/>
            <person name="Hoffmaster A."/>
            <person name="Hill K.K."/>
            <person name="Keim P."/>
            <person name="Koehler T."/>
            <person name="Lamke G."/>
            <person name="Kumano S."/>
            <person name="Manter D."/>
            <person name="Martinez Y."/>
            <person name="Ricke D."/>
            <person name="Svensson R."/>
            <person name="Jackson P.J."/>
        </authorList>
    </citation>
    <scope>NUCLEOTIDE SEQUENCE [GENOMIC DNA]</scope>
    <source>
        <strain>Pasteur</strain>
    </source>
</reference>
<reference key="2">
    <citation type="journal article" date="2002" name="Science">
        <title>Comparative genome sequencing for discovery of novel polymorphisms in Bacillus anthracis.</title>
        <authorList>
            <person name="Read T.D."/>
            <person name="Salzberg S.L."/>
            <person name="Pop M."/>
            <person name="Shumway M.F."/>
            <person name="Umayam L."/>
            <person name="Jiang L."/>
            <person name="Holtzapple E."/>
            <person name="Busch J.D."/>
            <person name="Smith K.L."/>
            <person name="Schupp J.M."/>
            <person name="Solomon D."/>
            <person name="Keim P."/>
            <person name="Fraser C.M."/>
        </authorList>
    </citation>
    <scope>NUCLEOTIDE SEQUENCE [GENOMIC DNA]</scope>
    <source>
        <strain>Ames / isolate Florida / A2012</strain>
    </source>
</reference>
<reference key="3">
    <citation type="journal article" date="2009" name="J. Bacteriol.">
        <title>The complete genome sequence of Bacillus anthracis Ames 'Ancestor'.</title>
        <authorList>
            <person name="Ravel J."/>
            <person name="Jiang L."/>
            <person name="Stanley S.T."/>
            <person name="Wilson M.R."/>
            <person name="Decker R.S."/>
            <person name="Read T.D."/>
            <person name="Worsham P."/>
            <person name="Keim P.S."/>
            <person name="Salzberg S.L."/>
            <person name="Fraser-Liggett C.M."/>
            <person name="Rasko D.A."/>
        </authorList>
    </citation>
    <scope>NUCLEOTIDE SEQUENCE [LARGE SCALE GENOMIC DNA]</scope>
    <source>
        <strain>Ames ancestor</strain>
    </source>
</reference>
<keyword id="KW-0472">Membrane</keyword>
<keyword id="KW-0614">Plasmid</keyword>
<keyword id="KW-1185">Reference proteome</keyword>
<keyword id="KW-0812">Transmembrane</keyword>
<keyword id="KW-1133">Transmembrane helix</keyword>
<name>Y6511_BACAN</name>
<comment type="subcellular location">
    <subcellularLocation>
        <location evidence="2">Membrane</location>
        <topology evidence="2">Single-pass membrane protein</topology>
    </subcellularLocation>
</comment>
<organism>
    <name type="scientific">Bacillus anthracis</name>
    <dbReference type="NCBI Taxonomy" id="1392"/>
    <lineage>
        <taxon>Bacteria</taxon>
        <taxon>Bacillati</taxon>
        <taxon>Bacillota</taxon>
        <taxon>Bacilli</taxon>
        <taxon>Bacillales</taxon>
        <taxon>Bacillaceae</taxon>
        <taxon>Bacillus</taxon>
        <taxon>Bacillus cereus group</taxon>
    </lineage>
</organism>
<sequence length="67" mass="8076">MNNWIFAILMLGVAIVLSIIATFFKQIFTIFKRRKKKEPVWVTVTNAEYLDRDFWKGKEQKDKKEHD</sequence>
<gene>
    <name type="ordered locus">pXO2-12</name>
    <name type="ordered locus">BXB0011</name>
    <name type="ordered locus">GBAA_pXO2_0011</name>
</gene>
<evidence type="ECO:0000255" key="1"/>
<evidence type="ECO:0000305" key="2"/>